<comment type="function">
    <text evidence="1">Nucleotide-binding protein.</text>
</comment>
<comment type="similarity">
    <text evidence="1">Belongs to the YajQ family.</text>
</comment>
<accession>B9LFQ7</accession>
<reference key="1">
    <citation type="submission" date="2009-01" db="EMBL/GenBank/DDBJ databases">
        <title>Complete sequence of Chloroflexus sp. Y-400-fl.</title>
        <authorList>
            <consortium name="US DOE Joint Genome Institute"/>
            <person name="Lucas S."/>
            <person name="Copeland A."/>
            <person name="Lapidus A."/>
            <person name="Glavina del Rio T."/>
            <person name="Dalin E."/>
            <person name="Tice H."/>
            <person name="Bruce D."/>
            <person name="Goodwin L."/>
            <person name="Pitluck S."/>
            <person name="Sims D."/>
            <person name="Kiss H."/>
            <person name="Brettin T."/>
            <person name="Detter J.C."/>
            <person name="Han C."/>
            <person name="Larimer F."/>
            <person name="Land M."/>
            <person name="Hauser L."/>
            <person name="Kyrpides N."/>
            <person name="Ovchinnikova G."/>
            <person name="Bryant D.A."/>
            <person name="Richardson P."/>
        </authorList>
    </citation>
    <scope>NUCLEOTIDE SEQUENCE [LARGE SCALE GENOMIC DNA]</scope>
    <source>
        <strain>ATCC 29364 / DSM 637 / Y-400-fl</strain>
    </source>
</reference>
<organism>
    <name type="scientific">Chloroflexus aurantiacus (strain ATCC 29364 / DSM 637 / Y-400-fl)</name>
    <dbReference type="NCBI Taxonomy" id="480224"/>
    <lineage>
        <taxon>Bacteria</taxon>
        <taxon>Bacillati</taxon>
        <taxon>Chloroflexota</taxon>
        <taxon>Chloroflexia</taxon>
        <taxon>Chloroflexales</taxon>
        <taxon>Chloroflexineae</taxon>
        <taxon>Chloroflexaceae</taxon>
        <taxon>Chloroflexus</taxon>
    </lineage>
</organism>
<proteinExistence type="inferred from homology"/>
<feature type="chain" id="PRO_1000147294" description="Nucleotide-binding protein Chy400_2003">
    <location>
        <begin position="1"/>
        <end position="165"/>
    </location>
</feature>
<sequence length="165" mass="18808">MPAENSFDIVSDFDQQELVNAVDQTLREVQTRYDLKDAGVTITLTKTELIIEADSEMSLRSVRDVLETKALRRKLSLKIFDYGKPTDASGGRVRQVVTLRRGIDSELAKKLSKMIRDRFPKVQPRIQGDSLRVAGKSRDELQAVIAFLREREGEIPVPLQMTNYR</sequence>
<dbReference type="EMBL" id="CP001364">
    <property type="protein sequence ID" value="ACM53408.1"/>
    <property type="molecule type" value="Genomic_DNA"/>
</dbReference>
<dbReference type="SMR" id="B9LFQ7"/>
<dbReference type="KEGG" id="chl:Chy400_2003"/>
<dbReference type="HOGENOM" id="CLU_099839_0_0_0"/>
<dbReference type="OrthoDB" id="9801447at2"/>
<dbReference type="GO" id="GO:0005829">
    <property type="term" value="C:cytosol"/>
    <property type="evidence" value="ECO:0007669"/>
    <property type="project" value="TreeGrafter"/>
</dbReference>
<dbReference type="GO" id="GO:0000166">
    <property type="term" value="F:nucleotide binding"/>
    <property type="evidence" value="ECO:0007669"/>
    <property type="project" value="TreeGrafter"/>
</dbReference>
<dbReference type="CDD" id="cd11740">
    <property type="entry name" value="YajQ_like"/>
    <property type="match status" value="1"/>
</dbReference>
<dbReference type="FunFam" id="3.30.70.990:FF:000002">
    <property type="entry name" value="UPF0234 protein LEP1GSC067_4943"/>
    <property type="match status" value="1"/>
</dbReference>
<dbReference type="Gene3D" id="3.30.70.860">
    <property type="match status" value="1"/>
</dbReference>
<dbReference type="Gene3D" id="3.30.70.990">
    <property type="entry name" value="YajQ-like, domain 2"/>
    <property type="match status" value="1"/>
</dbReference>
<dbReference type="HAMAP" id="MF_00632">
    <property type="entry name" value="YajQ"/>
    <property type="match status" value="1"/>
</dbReference>
<dbReference type="InterPro" id="IPR007551">
    <property type="entry name" value="DUF520"/>
</dbReference>
<dbReference type="InterPro" id="IPR035571">
    <property type="entry name" value="UPF0234-like_C"/>
</dbReference>
<dbReference type="InterPro" id="IPR035570">
    <property type="entry name" value="UPF0234_N"/>
</dbReference>
<dbReference type="InterPro" id="IPR036183">
    <property type="entry name" value="YajQ-like_sf"/>
</dbReference>
<dbReference type="NCBIfam" id="NF003819">
    <property type="entry name" value="PRK05412.1"/>
    <property type="match status" value="1"/>
</dbReference>
<dbReference type="PANTHER" id="PTHR30476">
    <property type="entry name" value="UPF0234 PROTEIN YAJQ"/>
    <property type="match status" value="1"/>
</dbReference>
<dbReference type="PANTHER" id="PTHR30476:SF0">
    <property type="entry name" value="UPF0234 PROTEIN YAJQ"/>
    <property type="match status" value="1"/>
</dbReference>
<dbReference type="Pfam" id="PF04461">
    <property type="entry name" value="DUF520"/>
    <property type="match status" value="1"/>
</dbReference>
<dbReference type="SUPFAM" id="SSF89963">
    <property type="entry name" value="YajQ-like"/>
    <property type="match status" value="2"/>
</dbReference>
<evidence type="ECO:0000255" key="1">
    <source>
        <dbReference type="HAMAP-Rule" id="MF_00632"/>
    </source>
</evidence>
<gene>
    <name type="ordered locus">Chy400_2003</name>
</gene>
<keyword id="KW-0547">Nucleotide-binding</keyword>
<protein>
    <recommendedName>
        <fullName evidence="1">Nucleotide-binding protein Chy400_2003</fullName>
    </recommendedName>
</protein>
<name>Y2003_CHLSY</name>